<comment type="similarity">
    <text evidence="1">Belongs to the UPF0181 family.</text>
</comment>
<organism>
    <name type="scientific">Pectobacterium carotovorum subsp. carotovorum (strain PC1)</name>
    <dbReference type="NCBI Taxonomy" id="561230"/>
    <lineage>
        <taxon>Bacteria</taxon>
        <taxon>Pseudomonadati</taxon>
        <taxon>Pseudomonadota</taxon>
        <taxon>Gammaproteobacteria</taxon>
        <taxon>Enterobacterales</taxon>
        <taxon>Pectobacteriaceae</taxon>
        <taxon>Pectobacterium</taxon>
    </lineage>
</organism>
<dbReference type="EMBL" id="CP001657">
    <property type="protein sequence ID" value="ACT12972.1"/>
    <property type="molecule type" value="Genomic_DNA"/>
</dbReference>
<dbReference type="RefSeq" id="WP_015840167.1">
    <property type="nucleotide sequence ID" value="NC_012917.1"/>
</dbReference>
<dbReference type="SMR" id="C6DG29"/>
<dbReference type="STRING" id="561230.PC1_1931"/>
<dbReference type="KEGG" id="pct:PC1_1931"/>
<dbReference type="eggNOG" id="COG3140">
    <property type="taxonomic scope" value="Bacteria"/>
</dbReference>
<dbReference type="HOGENOM" id="CLU_185263_0_0_6"/>
<dbReference type="OrthoDB" id="6522084at2"/>
<dbReference type="Proteomes" id="UP000002736">
    <property type="component" value="Chromosome"/>
</dbReference>
<dbReference type="HAMAP" id="MF_00507">
    <property type="entry name" value="UPF0181"/>
    <property type="match status" value="1"/>
</dbReference>
<dbReference type="InterPro" id="IPR005371">
    <property type="entry name" value="UPF0181"/>
</dbReference>
<dbReference type="NCBIfam" id="NF003476">
    <property type="entry name" value="PRK05114.1"/>
    <property type="match status" value="1"/>
</dbReference>
<dbReference type="Pfam" id="PF03701">
    <property type="entry name" value="UPF0181"/>
    <property type="match status" value="1"/>
</dbReference>
<gene>
    <name type="ordered locus">PC1_1931</name>
</gene>
<name>Y1931_PECCP</name>
<sequence length="79" mass="8856">MIAGMPALTHKQQQDAVERIQELMSEGMSSGQAIAQVAAEIRQEHQGDNVAVMFDEDDDTVNDSDEEHYFDDGEEEDEQ</sequence>
<proteinExistence type="inferred from homology"/>
<reference key="1">
    <citation type="submission" date="2009-07" db="EMBL/GenBank/DDBJ databases">
        <title>Complete sequence of Pectobacterium carotovorum subsp. carotovorum PC1.</title>
        <authorList>
            <consortium name="US DOE Joint Genome Institute"/>
            <person name="Lucas S."/>
            <person name="Copeland A."/>
            <person name="Lapidus A."/>
            <person name="Glavina del Rio T."/>
            <person name="Tice H."/>
            <person name="Bruce D."/>
            <person name="Goodwin L."/>
            <person name="Pitluck S."/>
            <person name="Munk A.C."/>
            <person name="Brettin T."/>
            <person name="Detter J.C."/>
            <person name="Han C."/>
            <person name="Tapia R."/>
            <person name="Larimer F."/>
            <person name="Land M."/>
            <person name="Hauser L."/>
            <person name="Kyrpides N."/>
            <person name="Mikhailova N."/>
            <person name="Balakrishnan V."/>
            <person name="Glasner J."/>
            <person name="Perna N.T."/>
        </authorList>
    </citation>
    <scope>NUCLEOTIDE SEQUENCE [LARGE SCALE GENOMIC DNA]</scope>
    <source>
        <strain>PC1</strain>
    </source>
</reference>
<protein>
    <recommendedName>
        <fullName evidence="1">UPF0181 protein PC1_1931</fullName>
    </recommendedName>
</protein>
<accession>C6DG29</accession>
<evidence type="ECO:0000255" key="1">
    <source>
        <dbReference type="HAMAP-Rule" id="MF_00507"/>
    </source>
</evidence>
<evidence type="ECO:0000256" key="2">
    <source>
        <dbReference type="SAM" id="MobiDB-lite"/>
    </source>
</evidence>
<feature type="chain" id="PRO_1000206573" description="UPF0181 protein PC1_1931">
    <location>
        <begin position="1"/>
        <end position="79"/>
    </location>
</feature>
<feature type="region of interest" description="Disordered" evidence="2">
    <location>
        <begin position="54"/>
        <end position="79"/>
    </location>
</feature>